<evidence type="ECO:0000255" key="1">
    <source>
        <dbReference type="HAMAP-Rule" id="MF_00254"/>
    </source>
</evidence>
<accession>Q8YVJ2</accession>
<keyword id="KW-0030">Aminoacyl-tRNA synthetase</keyword>
<keyword id="KW-0067">ATP-binding</keyword>
<keyword id="KW-0963">Cytoplasm</keyword>
<keyword id="KW-0436">Ligase</keyword>
<keyword id="KW-0547">Nucleotide-binding</keyword>
<keyword id="KW-0648">Protein biosynthesis</keyword>
<keyword id="KW-1185">Reference proteome</keyword>
<name>SYGA_NOSS1</name>
<protein>
    <recommendedName>
        <fullName evidence="1">Glycine--tRNA ligase alpha subunit</fullName>
        <ecNumber evidence="1">6.1.1.14</ecNumber>
    </recommendedName>
    <alternativeName>
        <fullName evidence="1">Glycyl-tRNA synthetase alpha subunit</fullName>
        <shortName evidence="1">GlyRS</shortName>
    </alternativeName>
</protein>
<proteinExistence type="inferred from homology"/>
<sequence length="294" mass="34077">MNFQSVIATLHQFWAERGCLIAQPYDIEKGAGTKNPHTFLRALGPEPWAVAYIEPCRRPTDGRYGENPNRFQHYYQYQVLIKPSPDNIQDIYLDSLRALGIRPEDHDIRFVEDNWEDATVGAWGTGWEVWLDGMEITQFTYFQQCGGIDCRPVSIEITYGLERLAMYLQEVEAITKIHWTDDITYGDVFLQNEIEQSTYNFEASNPELLLTLFNLYEQEASQLTERGLVLPSLDYVMKCSHTFNLLDARGVISVTERTRYIARIRHLARKVANLYVEQREKLGFPLLKNVPVAR</sequence>
<feature type="chain" id="PRO_0000072824" description="Glycine--tRNA ligase alpha subunit">
    <location>
        <begin position="1"/>
        <end position="294"/>
    </location>
</feature>
<comment type="catalytic activity">
    <reaction evidence="1">
        <text>tRNA(Gly) + glycine + ATP = glycyl-tRNA(Gly) + AMP + diphosphate</text>
        <dbReference type="Rhea" id="RHEA:16013"/>
        <dbReference type="Rhea" id="RHEA-COMP:9664"/>
        <dbReference type="Rhea" id="RHEA-COMP:9683"/>
        <dbReference type="ChEBI" id="CHEBI:30616"/>
        <dbReference type="ChEBI" id="CHEBI:33019"/>
        <dbReference type="ChEBI" id="CHEBI:57305"/>
        <dbReference type="ChEBI" id="CHEBI:78442"/>
        <dbReference type="ChEBI" id="CHEBI:78522"/>
        <dbReference type="ChEBI" id="CHEBI:456215"/>
        <dbReference type="EC" id="6.1.1.14"/>
    </reaction>
</comment>
<comment type="subunit">
    <text evidence="1">Tetramer of two alpha and two beta subunits.</text>
</comment>
<comment type="subcellular location">
    <subcellularLocation>
        <location evidence="1">Cytoplasm</location>
    </subcellularLocation>
</comment>
<comment type="similarity">
    <text evidence="1">Belongs to the class-II aminoacyl-tRNA synthetase family.</text>
</comment>
<reference key="1">
    <citation type="journal article" date="2001" name="DNA Res.">
        <title>Complete genomic sequence of the filamentous nitrogen-fixing cyanobacterium Anabaena sp. strain PCC 7120.</title>
        <authorList>
            <person name="Kaneko T."/>
            <person name="Nakamura Y."/>
            <person name="Wolk C.P."/>
            <person name="Kuritz T."/>
            <person name="Sasamoto S."/>
            <person name="Watanabe A."/>
            <person name="Iriguchi M."/>
            <person name="Ishikawa A."/>
            <person name="Kawashima K."/>
            <person name="Kimura T."/>
            <person name="Kishida Y."/>
            <person name="Kohara M."/>
            <person name="Matsumoto M."/>
            <person name="Matsuno A."/>
            <person name="Muraki A."/>
            <person name="Nakazaki N."/>
            <person name="Shimpo S."/>
            <person name="Sugimoto M."/>
            <person name="Takazawa M."/>
            <person name="Yamada M."/>
            <person name="Yasuda M."/>
            <person name="Tabata S."/>
        </authorList>
    </citation>
    <scope>NUCLEOTIDE SEQUENCE [LARGE SCALE GENOMIC DNA]</scope>
    <source>
        <strain>PCC 7120 / SAG 25.82 / UTEX 2576</strain>
    </source>
</reference>
<dbReference type="EC" id="6.1.1.14" evidence="1"/>
<dbReference type="EMBL" id="BA000019">
    <property type="protein sequence ID" value="BAB73684.1"/>
    <property type="molecule type" value="Genomic_DNA"/>
</dbReference>
<dbReference type="PIR" id="AC2054">
    <property type="entry name" value="AC2054"/>
</dbReference>
<dbReference type="RefSeq" id="WP_010996147.1">
    <property type="nucleotide sequence ID" value="NZ_RSCN01000063.1"/>
</dbReference>
<dbReference type="SMR" id="Q8YVJ2"/>
<dbReference type="STRING" id="103690.gene:10494004"/>
<dbReference type="KEGG" id="ana:all1985"/>
<dbReference type="eggNOG" id="COG0752">
    <property type="taxonomic scope" value="Bacteria"/>
</dbReference>
<dbReference type="OrthoDB" id="9802183at2"/>
<dbReference type="Proteomes" id="UP000002483">
    <property type="component" value="Chromosome"/>
</dbReference>
<dbReference type="GO" id="GO:0005829">
    <property type="term" value="C:cytosol"/>
    <property type="evidence" value="ECO:0007669"/>
    <property type="project" value="TreeGrafter"/>
</dbReference>
<dbReference type="GO" id="GO:0005524">
    <property type="term" value="F:ATP binding"/>
    <property type="evidence" value="ECO:0007669"/>
    <property type="project" value="UniProtKB-UniRule"/>
</dbReference>
<dbReference type="GO" id="GO:0004820">
    <property type="term" value="F:glycine-tRNA ligase activity"/>
    <property type="evidence" value="ECO:0007669"/>
    <property type="project" value="UniProtKB-UniRule"/>
</dbReference>
<dbReference type="GO" id="GO:0006426">
    <property type="term" value="P:glycyl-tRNA aminoacylation"/>
    <property type="evidence" value="ECO:0007669"/>
    <property type="project" value="UniProtKB-UniRule"/>
</dbReference>
<dbReference type="CDD" id="cd00733">
    <property type="entry name" value="GlyRS_alpha_core"/>
    <property type="match status" value="1"/>
</dbReference>
<dbReference type="FunFam" id="3.30.930.10:FF:000006">
    <property type="entry name" value="Glycine--tRNA ligase alpha subunit"/>
    <property type="match status" value="1"/>
</dbReference>
<dbReference type="Gene3D" id="3.30.930.10">
    <property type="entry name" value="Bira Bifunctional Protein, Domain 2"/>
    <property type="match status" value="1"/>
</dbReference>
<dbReference type="Gene3D" id="1.20.58.180">
    <property type="entry name" value="Class II aaRS and biotin synthetases, domain 2"/>
    <property type="match status" value="1"/>
</dbReference>
<dbReference type="HAMAP" id="MF_00254">
    <property type="entry name" value="Gly_tRNA_synth_alpha"/>
    <property type="match status" value="1"/>
</dbReference>
<dbReference type="InterPro" id="IPR045864">
    <property type="entry name" value="aa-tRNA-synth_II/BPL/LPL"/>
</dbReference>
<dbReference type="InterPro" id="IPR006194">
    <property type="entry name" value="Gly-tRNA-synth_heterodimer"/>
</dbReference>
<dbReference type="InterPro" id="IPR002310">
    <property type="entry name" value="Gly-tRNA_ligase_asu"/>
</dbReference>
<dbReference type="NCBIfam" id="TIGR00388">
    <property type="entry name" value="glyQ"/>
    <property type="match status" value="1"/>
</dbReference>
<dbReference type="NCBIfam" id="NF006827">
    <property type="entry name" value="PRK09348.1"/>
    <property type="match status" value="1"/>
</dbReference>
<dbReference type="PANTHER" id="PTHR30075:SF2">
    <property type="entry name" value="GLYCINE--TRNA LIGASE, CHLOROPLASTIC_MITOCHONDRIAL 2"/>
    <property type="match status" value="1"/>
</dbReference>
<dbReference type="PANTHER" id="PTHR30075">
    <property type="entry name" value="GLYCYL-TRNA SYNTHETASE"/>
    <property type="match status" value="1"/>
</dbReference>
<dbReference type="Pfam" id="PF02091">
    <property type="entry name" value="tRNA-synt_2e"/>
    <property type="match status" value="1"/>
</dbReference>
<dbReference type="PRINTS" id="PR01044">
    <property type="entry name" value="TRNASYNTHGA"/>
</dbReference>
<dbReference type="SUPFAM" id="SSF55681">
    <property type="entry name" value="Class II aaRS and biotin synthetases"/>
    <property type="match status" value="1"/>
</dbReference>
<dbReference type="PROSITE" id="PS50861">
    <property type="entry name" value="AA_TRNA_LIGASE_II_GLYAB"/>
    <property type="match status" value="1"/>
</dbReference>
<organism>
    <name type="scientific">Nostoc sp. (strain PCC 7120 / SAG 25.82 / UTEX 2576)</name>
    <dbReference type="NCBI Taxonomy" id="103690"/>
    <lineage>
        <taxon>Bacteria</taxon>
        <taxon>Bacillati</taxon>
        <taxon>Cyanobacteriota</taxon>
        <taxon>Cyanophyceae</taxon>
        <taxon>Nostocales</taxon>
        <taxon>Nostocaceae</taxon>
        <taxon>Nostoc</taxon>
    </lineage>
</organism>
<gene>
    <name evidence="1" type="primary">glyQ</name>
    <name type="ordered locus">all1985</name>
</gene>